<keyword id="KW-0044">Antibiotic</keyword>
<keyword id="KW-0929">Antimicrobial</keyword>
<keyword id="KW-0053">Apoptosis</keyword>
<keyword id="KW-0204">Cytolysis</keyword>
<keyword id="KW-0903">Direct protein sequencing</keyword>
<keyword id="KW-1015">Disulfide bond</keyword>
<keyword id="KW-0274">FAD</keyword>
<keyword id="KW-0285">Flavoprotein</keyword>
<keyword id="KW-0325">Glycoprotein</keyword>
<keyword id="KW-0354">Hemolysis</keyword>
<keyword id="KW-1200">Hemorrhagic toxin</keyword>
<keyword id="KW-1199">Hemostasis impairing toxin</keyword>
<keyword id="KW-0560">Oxidoreductase</keyword>
<keyword id="KW-1202">Platelet aggregation activating toxin</keyword>
<keyword id="KW-0964">Secreted</keyword>
<keyword id="KW-0800">Toxin</keyword>
<dbReference type="EC" id="1.4.3.2" evidence="3"/>
<dbReference type="GO" id="GO:0005576">
    <property type="term" value="C:extracellular region"/>
    <property type="evidence" value="ECO:0007669"/>
    <property type="project" value="UniProtKB-SubCell"/>
</dbReference>
<dbReference type="GO" id="GO:0106329">
    <property type="term" value="F:L-phenylalaine oxidase activity"/>
    <property type="evidence" value="ECO:0007669"/>
    <property type="project" value="RHEA"/>
</dbReference>
<dbReference type="GO" id="GO:0090729">
    <property type="term" value="F:toxin activity"/>
    <property type="evidence" value="ECO:0007669"/>
    <property type="project" value="UniProtKB-KW"/>
</dbReference>
<dbReference type="GO" id="GO:0006915">
    <property type="term" value="P:apoptotic process"/>
    <property type="evidence" value="ECO:0007669"/>
    <property type="project" value="UniProtKB-KW"/>
</dbReference>
<dbReference type="GO" id="GO:0042742">
    <property type="term" value="P:defense response to bacterium"/>
    <property type="evidence" value="ECO:0007669"/>
    <property type="project" value="UniProtKB-KW"/>
</dbReference>
<dbReference type="GO" id="GO:0031640">
    <property type="term" value="P:killing of cells of another organism"/>
    <property type="evidence" value="ECO:0007669"/>
    <property type="project" value="UniProtKB-KW"/>
</dbReference>
<name>OXLA_BOTAL</name>
<accession>P0DI86</accession>
<feature type="chain" id="PRO_0000412593" description="L-amino-acid oxidase">
    <location>
        <begin position="1"/>
        <end position="18" status="greater than"/>
    </location>
</feature>
<feature type="non-terminal residue" evidence="4">
    <location>
        <position position="18"/>
    </location>
</feature>
<organism>
    <name type="scientific">Bothrops alternatus</name>
    <name type="common">Urutu</name>
    <name type="synonym">Rhinocerophis alternatus</name>
    <dbReference type="NCBI Taxonomy" id="64174"/>
    <lineage>
        <taxon>Eukaryota</taxon>
        <taxon>Metazoa</taxon>
        <taxon>Chordata</taxon>
        <taxon>Craniata</taxon>
        <taxon>Vertebrata</taxon>
        <taxon>Euteleostomi</taxon>
        <taxon>Lepidosauria</taxon>
        <taxon>Squamata</taxon>
        <taxon>Bifurcata</taxon>
        <taxon>Unidentata</taxon>
        <taxon>Episquamata</taxon>
        <taxon>Toxicofera</taxon>
        <taxon>Serpentes</taxon>
        <taxon>Colubroidea</taxon>
        <taxon>Viperidae</taxon>
        <taxon>Crotalinae</taxon>
        <taxon>Bothrops</taxon>
    </lineage>
</organism>
<comment type="function">
    <text evidence="1 3">Catalyzes an oxidative deamination of predominantly hydrophobic and aromatic L-amino acids, thus producing hydrogen peroxide that may contribute to the diverse toxic effects of this enzyme (PubMed:15142548). Is highly active on L-Phe &gt; L-Tyr &gt; L-Met &gt; L-Leu, and is weakly or not active on other amino acids (PubMed:15142548). Exhibits diverse biological activities, such as slight hemorrhage, induction of platelet aggregation, edema in the mouse paw and bactericidal activity against both Gram-positive (S.aureus) and Gram-negative (E.coli) bacteria (PubMed:15142548). May also induce hemolysis, apoptosis of vascular endothelial cells or tumor cell lines, and may have antiparasitic activities (By similarity). Effects of snake L-amino oxidases on platelets are controversial, since they either induce aggregation or inhibit agonist-induced aggregation. These different effects are probably due to different experimental conditions.</text>
</comment>
<comment type="catalytic activity">
    <reaction evidence="3">
        <text>an L-alpha-amino acid + O2 + H2O = a 2-oxocarboxylate + H2O2 + NH4(+)</text>
        <dbReference type="Rhea" id="RHEA:13781"/>
        <dbReference type="ChEBI" id="CHEBI:15377"/>
        <dbReference type="ChEBI" id="CHEBI:15379"/>
        <dbReference type="ChEBI" id="CHEBI:16240"/>
        <dbReference type="ChEBI" id="CHEBI:28938"/>
        <dbReference type="ChEBI" id="CHEBI:35179"/>
        <dbReference type="ChEBI" id="CHEBI:59869"/>
        <dbReference type="EC" id="1.4.3.2"/>
    </reaction>
</comment>
<comment type="catalytic activity">
    <reaction evidence="3">
        <text>L-leucine + O2 + H2O = 4-methyl-2-oxopentanoate + H2O2 + NH4(+)</text>
        <dbReference type="Rhea" id="RHEA:60996"/>
        <dbReference type="ChEBI" id="CHEBI:15377"/>
        <dbReference type="ChEBI" id="CHEBI:15379"/>
        <dbReference type="ChEBI" id="CHEBI:16240"/>
        <dbReference type="ChEBI" id="CHEBI:17865"/>
        <dbReference type="ChEBI" id="CHEBI:28938"/>
        <dbReference type="ChEBI" id="CHEBI:57427"/>
    </reaction>
</comment>
<comment type="catalytic activity">
    <reaction evidence="3">
        <text>L-phenylalanine + O2 + H2O = 3-phenylpyruvate + H2O2 + NH4(+)</text>
        <dbReference type="Rhea" id="RHEA:61240"/>
        <dbReference type="ChEBI" id="CHEBI:15377"/>
        <dbReference type="ChEBI" id="CHEBI:15379"/>
        <dbReference type="ChEBI" id="CHEBI:16240"/>
        <dbReference type="ChEBI" id="CHEBI:18005"/>
        <dbReference type="ChEBI" id="CHEBI:28938"/>
        <dbReference type="ChEBI" id="CHEBI:58095"/>
    </reaction>
</comment>
<comment type="catalytic activity">
    <reaction evidence="3">
        <text>L-methionine + O2 + H2O = 4-methylsulfanyl-2-oxobutanoate + H2O2 + NH4(+)</text>
        <dbReference type="Rhea" id="RHEA:61236"/>
        <dbReference type="ChEBI" id="CHEBI:15377"/>
        <dbReference type="ChEBI" id="CHEBI:15379"/>
        <dbReference type="ChEBI" id="CHEBI:16240"/>
        <dbReference type="ChEBI" id="CHEBI:16723"/>
        <dbReference type="ChEBI" id="CHEBI:28938"/>
        <dbReference type="ChEBI" id="CHEBI:57844"/>
    </reaction>
</comment>
<comment type="catalytic activity">
    <reaction evidence="3">
        <text>L-tyrosine + O2 + H2O = 3-(4-hydroxyphenyl)pyruvate + H2O2 + NH4(+)</text>
        <dbReference type="Rhea" id="RHEA:61248"/>
        <dbReference type="ChEBI" id="CHEBI:15377"/>
        <dbReference type="ChEBI" id="CHEBI:15379"/>
        <dbReference type="ChEBI" id="CHEBI:16240"/>
        <dbReference type="ChEBI" id="CHEBI:28938"/>
        <dbReference type="ChEBI" id="CHEBI:36242"/>
        <dbReference type="ChEBI" id="CHEBI:58315"/>
    </reaction>
</comment>
<comment type="cofactor">
    <cofactor evidence="2">
        <name>FAD</name>
        <dbReference type="ChEBI" id="CHEBI:57692"/>
    </cofactor>
</comment>
<comment type="subunit">
    <text evidence="3">Homodimer; non-covalently linked.</text>
</comment>
<comment type="subcellular location">
    <subcellularLocation>
        <location evidence="3">Secreted</location>
    </subcellularLocation>
</comment>
<comment type="tissue specificity">
    <text evidence="6">Expressed by the venom gland.</text>
</comment>
<comment type="PTM">
    <text evidence="2">Contains 2 disulfide bonds.</text>
</comment>
<comment type="PTM">
    <text evidence="3">N-glycosylated. The enzymatic activity is not affected by deglycosylation.</text>
</comment>
<comment type="similarity">
    <text evidence="5">Belongs to the flavin monoamine oxidase family. FIG1 subfamily.</text>
</comment>
<comment type="caution">
    <text evidence="6">The existence of several isoforms has been reported that may be due to either different composition or different glycosylation or by the synthesis from different genes.</text>
</comment>
<sequence>ADVRNPLEEFRETDYEVL</sequence>
<protein>
    <recommendedName>
        <fullName>L-amino-acid oxidase</fullName>
        <shortName evidence="4">Balt-LAAO-I</shortName>
        <shortName>LAO</shortName>
        <ecNumber evidence="3">1.4.3.2</ecNumber>
    </recommendedName>
</protein>
<evidence type="ECO:0000250" key="1"/>
<evidence type="ECO:0000250" key="2">
    <source>
        <dbReference type="UniProtKB" id="P81382"/>
    </source>
</evidence>
<evidence type="ECO:0000269" key="3">
    <source>
    </source>
</evidence>
<evidence type="ECO:0000303" key="4">
    <source>
    </source>
</evidence>
<evidence type="ECO:0000305" key="5"/>
<evidence type="ECO:0000305" key="6">
    <source>
    </source>
</evidence>
<reference key="1">
    <citation type="journal article" date="2004" name="Bioorg. Med. Chem.">
        <title>Platelet aggregation and antibacterial effects of an L-amino acid oxidase purified from Bothrops alternatus snake venom.</title>
        <authorList>
            <person name="Stabeli R.G."/>
            <person name="Marcussi S."/>
            <person name="Carlos G.B."/>
            <person name="Pietro R.C."/>
            <person name="Selistre-de-Araujo H.S."/>
            <person name="Giglio J.R."/>
            <person name="Oliveira E.B."/>
            <person name="Soares A.M."/>
        </authorList>
    </citation>
    <scope>PROTEIN SEQUENCE</scope>
    <scope>FUNCTION</scope>
    <scope>SUBUNIT</scope>
    <scope>SUBCELLULAR LOCATION</scope>
    <scope>GLYCOSYLATION</scope>
    <scope>SUBSTRATE SPECIFICITY</scope>
    <source>
        <tissue>Venom</tissue>
    </source>
</reference>
<proteinExistence type="evidence at protein level"/>